<dbReference type="EC" id="2.7.1.2" evidence="1"/>
<dbReference type="EMBL" id="CP000133">
    <property type="protein sequence ID" value="ABC88997.1"/>
    <property type="molecule type" value="Genomic_DNA"/>
</dbReference>
<dbReference type="RefSeq" id="WP_011423566.1">
    <property type="nucleotide sequence ID" value="NC_007761.1"/>
</dbReference>
<dbReference type="SMR" id="Q2KDT9"/>
<dbReference type="KEGG" id="ret:RHE_CH00172"/>
<dbReference type="eggNOG" id="COG0837">
    <property type="taxonomic scope" value="Bacteria"/>
</dbReference>
<dbReference type="HOGENOM" id="CLU_042582_1_0_5"/>
<dbReference type="OrthoDB" id="9800595at2"/>
<dbReference type="Proteomes" id="UP000001936">
    <property type="component" value="Chromosome"/>
</dbReference>
<dbReference type="GO" id="GO:0005829">
    <property type="term" value="C:cytosol"/>
    <property type="evidence" value="ECO:0007669"/>
    <property type="project" value="TreeGrafter"/>
</dbReference>
<dbReference type="GO" id="GO:0005524">
    <property type="term" value="F:ATP binding"/>
    <property type="evidence" value="ECO:0007669"/>
    <property type="project" value="UniProtKB-UniRule"/>
</dbReference>
<dbReference type="GO" id="GO:0005536">
    <property type="term" value="F:D-glucose binding"/>
    <property type="evidence" value="ECO:0007669"/>
    <property type="project" value="InterPro"/>
</dbReference>
<dbReference type="GO" id="GO:0004340">
    <property type="term" value="F:glucokinase activity"/>
    <property type="evidence" value="ECO:0007669"/>
    <property type="project" value="UniProtKB-UniRule"/>
</dbReference>
<dbReference type="GO" id="GO:0006096">
    <property type="term" value="P:glycolytic process"/>
    <property type="evidence" value="ECO:0007669"/>
    <property type="project" value="UniProtKB-UniRule"/>
</dbReference>
<dbReference type="CDD" id="cd24008">
    <property type="entry name" value="ASKHA_NBD_GLK"/>
    <property type="match status" value="1"/>
</dbReference>
<dbReference type="Gene3D" id="3.30.420.40">
    <property type="match status" value="1"/>
</dbReference>
<dbReference type="Gene3D" id="3.40.367.20">
    <property type="match status" value="1"/>
</dbReference>
<dbReference type="HAMAP" id="MF_00524">
    <property type="entry name" value="Glucokinase"/>
    <property type="match status" value="1"/>
</dbReference>
<dbReference type="InterPro" id="IPR043129">
    <property type="entry name" value="ATPase_NBD"/>
</dbReference>
<dbReference type="InterPro" id="IPR050201">
    <property type="entry name" value="Bacterial_glucokinase"/>
</dbReference>
<dbReference type="InterPro" id="IPR003836">
    <property type="entry name" value="Glucokinase"/>
</dbReference>
<dbReference type="NCBIfam" id="TIGR00749">
    <property type="entry name" value="glk"/>
    <property type="match status" value="1"/>
</dbReference>
<dbReference type="NCBIfam" id="NF001417">
    <property type="entry name" value="PRK00292.1-4"/>
    <property type="match status" value="1"/>
</dbReference>
<dbReference type="PANTHER" id="PTHR47690">
    <property type="entry name" value="GLUCOKINASE"/>
    <property type="match status" value="1"/>
</dbReference>
<dbReference type="PANTHER" id="PTHR47690:SF1">
    <property type="entry name" value="GLUCOKINASE"/>
    <property type="match status" value="1"/>
</dbReference>
<dbReference type="Pfam" id="PF02685">
    <property type="entry name" value="Glucokinase"/>
    <property type="match status" value="1"/>
</dbReference>
<dbReference type="SUPFAM" id="SSF53067">
    <property type="entry name" value="Actin-like ATPase domain"/>
    <property type="match status" value="1"/>
</dbReference>
<proteinExistence type="inferred from homology"/>
<keyword id="KW-0067">ATP-binding</keyword>
<keyword id="KW-0963">Cytoplasm</keyword>
<keyword id="KW-0324">Glycolysis</keyword>
<keyword id="KW-0418">Kinase</keyword>
<keyword id="KW-0547">Nucleotide-binding</keyword>
<keyword id="KW-1185">Reference proteome</keyword>
<keyword id="KW-0808">Transferase</keyword>
<gene>
    <name evidence="1" type="primary">glk</name>
    <name type="ordered locus">RHE_CH00172</name>
</gene>
<protein>
    <recommendedName>
        <fullName evidence="1">Glucokinase</fullName>
        <ecNumber evidence="1">2.7.1.2</ecNumber>
    </recommendedName>
    <alternativeName>
        <fullName evidence="1">Glucose kinase</fullName>
    </alternativeName>
</protein>
<evidence type="ECO:0000255" key="1">
    <source>
        <dbReference type="HAMAP-Rule" id="MF_00524"/>
    </source>
</evidence>
<name>GLK_RHIEC</name>
<organism>
    <name type="scientific">Rhizobium etli (strain ATCC 51251 / DSM 11541 / JCM 21823 / NBRC 15573 / CFN 42)</name>
    <dbReference type="NCBI Taxonomy" id="347834"/>
    <lineage>
        <taxon>Bacteria</taxon>
        <taxon>Pseudomonadati</taxon>
        <taxon>Pseudomonadota</taxon>
        <taxon>Alphaproteobacteria</taxon>
        <taxon>Hyphomicrobiales</taxon>
        <taxon>Rhizobiaceae</taxon>
        <taxon>Rhizobium/Agrobacterium group</taxon>
        <taxon>Rhizobium</taxon>
    </lineage>
</organism>
<reference key="1">
    <citation type="journal article" date="2006" name="Proc. Natl. Acad. Sci. U.S.A.">
        <title>The partitioned Rhizobium etli genome: genetic and metabolic redundancy in seven interacting replicons.</title>
        <authorList>
            <person name="Gonzalez V."/>
            <person name="Santamaria R.I."/>
            <person name="Bustos P."/>
            <person name="Hernandez-Gonzalez I."/>
            <person name="Medrano-Soto A."/>
            <person name="Moreno-Hagelsieb G."/>
            <person name="Janga S.C."/>
            <person name="Ramirez M.A."/>
            <person name="Jimenez-Jacinto V."/>
            <person name="Collado-Vides J."/>
            <person name="Davila G."/>
        </authorList>
    </citation>
    <scope>NUCLEOTIDE SEQUENCE [LARGE SCALE GENOMIC DNA]</scope>
    <source>
        <strain>ATCC 51251 / DSM 11541 / JCM 21823 / NBRC 15573 / CFN 42</strain>
    </source>
</reference>
<sequence length="341" mass="36427">MPKSNHSTAPLPFPILIGDIGGTNARFSILTDAYAEPKQFPNVRTADFATIDEAIQKGVLDKTAVQPRSAILAVAGPINDDEIPLTNCAWVVRPKTMIEGLGIEDVLVVNDFEAQALAIAALSDENRERIGSATGDMVASRVVLGPGTGLGVGGLVHAQHTWIPVPGEGGHIDLGPRSKRDYEIFPHIETIEGRVSAEQILCGRGLVNLYNAICVVDGIQPTMKDPADITSHALDGSDKVAVETVSLFATYLGRVAGDMAMVFMARGGVYLSGGISQKIIPALKKPEFRQAFEDKAPHSALLRTIPTYVVTHPLAALAGLSSYARMPANFGVSTEGRRWRR</sequence>
<accession>Q2KDT9</accession>
<comment type="catalytic activity">
    <reaction evidence="1">
        <text>D-glucose + ATP = D-glucose 6-phosphate + ADP + H(+)</text>
        <dbReference type="Rhea" id="RHEA:17825"/>
        <dbReference type="ChEBI" id="CHEBI:4167"/>
        <dbReference type="ChEBI" id="CHEBI:15378"/>
        <dbReference type="ChEBI" id="CHEBI:30616"/>
        <dbReference type="ChEBI" id="CHEBI:61548"/>
        <dbReference type="ChEBI" id="CHEBI:456216"/>
        <dbReference type="EC" id="2.7.1.2"/>
    </reaction>
</comment>
<comment type="subcellular location">
    <subcellularLocation>
        <location evidence="1">Cytoplasm</location>
    </subcellularLocation>
</comment>
<comment type="similarity">
    <text evidence="1">Belongs to the bacterial glucokinase family.</text>
</comment>
<feature type="chain" id="PRO_0000268782" description="Glucokinase">
    <location>
        <begin position="1"/>
        <end position="341"/>
    </location>
</feature>
<feature type="binding site" evidence="1">
    <location>
        <begin position="18"/>
        <end position="23"/>
    </location>
    <ligand>
        <name>ATP</name>
        <dbReference type="ChEBI" id="CHEBI:30616"/>
    </ligand>
</feature>